<proteinExistence type="evidence at protein level"/>
<dbReference type="EC" id="4.1.1.31" evidence="5"/>
<dbReference type="EMBL" id="AF248079">
    <property type="protein sequence ID" value="AAG17618.1"/>
    <property type="molecule type" value="mRNA"/>
</dbReference>
<dbReference type="SMR" id="Q9FV66"/>
<dbReference type="SABIO-RK" id="Q9FV66"/>
<dbReference type="GO" id="GO:0048046">
    <property type="term" value="C:apoplast"/>
    <property type="evidence" value="ECO:0007669"/>
    <property type="project" value="TreeGrafter"/>
</dbReference>
<dbReference type="GO" id="GO:0009507">
    <property type="term" value="C:chloroplast"/>
    <property type="evidence" value="ECO:0007669"/>
    <property type="project" value="TreeGrafter"/>
</dbReference>
<dbReference type="GO" id="GO:0005829">
    <property type="term" value="C:cytosol"/>
    <property type="evidence" value="ECO:0007669"/>
    <property type="project" value="TreeGrafter"/>
</dbReference>
<dbReference type="GO" id="GO:0008964">
    <property type="term" value="F:phosphoenolpyruvate carboxylase activity"/>
    <property type="evidence" value="ECO:0000314"/>
    <property type="project" value="UniProtKB"/>
</dbReference>
<dbReference type="GO" id="GO:0015977">
    <property type="term" value="P:carbon fixation"/>
    <property type="evidence" value="ECO:0000314"/>
    <property type="project" value="UniProtKB"/>
</dbReference>
<dbReference type="GO" id="GO:0048366">
    <property type="term" value="P:leaf development"/>
    <property type="evidence" value="ECO:0007669"/>
    <property type="project" value="TreeGrafter"/>
</dbReference>
<dbReference type="GO" id="GO:0009915">
    <property type="term" value="P:phloem sucrose loading"/>
    <property type="evidence" value="ECO:0000304"/>
    <property type="project" value="UniProtKB"/>
</dbReference>
<dbReference type="GO" id="GO:0006099">
    <property type="term" value="P:tricarboxylic acid cycle"/>
    <property type="evidence" value="ECO:0007669"/>
    <property type="project" value="InterPro"/>
</dbReference>
<dbReference type="FunFam" id="1.20.1440.90:FF:000001">
    <property type="entry name" value="Phosphoenolpyruvate carboxylase 1"/>
    <property type="match status" value="1"/>
</dbReference>
<dbReference type="Gene3D" id="1.20.1440.90">
    <property type="entry name" value="Phosphoenolpyruvate/pyruvate domain"/>
    <property type="match status" value="1"/>
</dbReference>
<dbReference type="HAMAP" id="MF_00595">
    <property type="entry name" value="PEPcase_type1"/>
    <property type="match status" value="1"/>
</dbReference>
<dbReference type="InterPro" id="IPR021135">
    <property type="entry name" value="PEP_COase"/>
</dbReference>
<dbReference type="InterPro" id="IPR022805">
    <property type="entry name" value="PEP_COase_bac/pln-type"/>
</dbReference>
<dbReference type="InterPro" id="IPR018129">
    <property type="entry name" value="PEP_COase_Lys_AS"/>
</dbReference>
<dbReference type="InterPro" id="IPR033129">
    <property type="entry name" value="PEPCASE_His_AS"/>
</dbReference>
<dbReference type="InterPro" id="IPR015813">
    <property type="entry name" value="Pyrv/PenolPyrv_kinase-like_dom"/>
</dbReference>
<dbReference type="NCBIfam" id="NF000584">
    <property type="entry name" value="PRK00009.1"/>
    <property type="match status" value="1"/>
</dbReference>
<dbReference type="PANTHER" id="PTHR30523">
    <property type="entry name" value="PHOSPHOENOLPYRUVATE CARBOXYLASE"/>
    <property type="match status" value="1"/>
</dbReference>
<dbReference type="PANTHER" id="PTHR30523:SF33">
    <property type="entry name" value="PHOSPHOENOLPYRUVATE CARBOXYLASE 3"/>
    <property type="match status" value="1"/>
</dbReference>
<dbReference type="Pfam" id="PF00311">
    <property type="entry name" value="PEPcase"/>
    <property type="match status" value="1"/>
</dbReference>
<dbReference type="PRINTS" id="PR00150">
    <property type="entry name" value="PEPCARBXLASE"/>
</dbReference>
<dbReference type="SUPFAM" id="SSF51621">
    <property type="entry name" value="Phosphoenolpyruvate/pyruvate domain"/>
    <property type="match status" value="1"/>
</dbReference>
<dbReference type="PROSITE" id="PS00781">
    <property type="entry name" value="PEPCASE_1"/>
    <property type="match status" value="1"/>
</dbReference>
<dbReference type="PROSITE" id="PS00393">
    <property type="entry name" value="PEPCASE_2"/>
    <property type="match status" value="1"/>
</dbReference>
<keyword id="KW-0120">Carbon dioxide fixation</keyword>
<keyword id="KW-0963">Cytoplasm</keyword>
<keyword id="KW-0456">Lyase</keyword>
<keyword id="KW-0460">Magnesium</keyword>
<keyword id="KW-0597">Phosphoprotein</keyword>
<feature type="chain" id="PRO_0000403439" description="Phosphoenolpyruvate carboxylase 1">
    <location>
        <begin position="1"/>
        <end position="965"/>
    </location>
</feature>
<feature type="active site" evidence="1">
    <location>
        <position position="172"/>
    </location>
</feature>
<feature type="active site" evidence="1">
    <location>
        <position position="600"/>
    </location>
</feature>
<feature type="active site" evidence="1">
    <location>
        <position position="641"/>
    </location>
</feature>
<feature type="binding site" evidence="3">
    <location>
        <position position="283"/>
    </location>
    <ligand>
        <name>D-glucose 6-phosphate</name>
        <dbReference type="ChEBI" id="CHEBI:61548"/>
    </ligand>
</feature>
<feature type="binding site" evidence="3">
    <location>
        <position position="450"/>
    </location>
    <ligand>
        <name>D-glucose 6-phosphate</name>
        <dbReference type="ChEBI" id="CHEBI:61548"/>
    </ligand>
</feature>
<feature type="binding site" evidence="3">
    <location>
        <position position="597"/>
    </location>
    <ligand>
        <name>D-glucose 6-phosphate</name>
        <dbReference type="ChEBI" id="CHEBI:61548"/>
    </ligand>
</feature>
<feature type="binding site" evidence="3">
    <location>
        <position position="635"/>
    </location>
    <ligand>
        <name>D-glucose 6-phosphate</name>
        <dbReference type="ChEBI" id="CHEBI:61548"/>
    </ligand>
</feature>
<feature type="binding site" evidence="3">
    <location>
        <position position="641"/>
    </location>
    <ligand>
        <name>L-aspartate</name>
        <dbReference type="ChEBI" id="CHEBI:29991"/>
    </ligand>
</feature>
<feature type="binding site" evidence="3">
    <location>
        <position position="665"/>
    </location>
    <ligand>
        <name>D-glucose 6-phosphate</name>
        <dbReference type="ChEBI" id="CHEBI:61548"/>
    </ligand>
</feature>
<feature type="binding site" evidence="3">
    <location>
        <position position="673"/>
    </location>
    <ligand>
        <name>L-aspartate</name>
        <dbReference type="ChEBI" id="CHEBI:29991"/>
    </ligand>
</feature>
<feature type="binding site" evidence="3">
    <location>
        <position position="753"/>
    </location>
    <ligand>
        <name>D-glucose 6-phosphate</name>
        <dbReference type="ChEBI" id="CHEBI:61548"/>
    </ligand>
</feature>
<feature type="binding site" evidence="3">
    <location>
        <begin position="767"/>
        <end position="769"/>
    </location>
    <ligand>
        <name>D-glucose 6-phosphate</name>
        <dbReference type="ChEBI" id="CHEBI:61548"/>
    </ligand>
</feature>
<feature type="binding site" evidence="3">
    <location>
        <position position="829"/>
    </location>
    <ligand>
        <name>L-aspartate</name>
        <dbReference type="ChEBI" id="CHEBI:29991"/>
    </ligand>
</feature>
<feature type="binding site" evidence="3">
    <location>
        <position position="888"/>
    </location>
    <ligand>
        <name>L-aspartate</name>
        <dbReference type="ChEBI" id="CHEBI:29991"/>
    </ligand>
</feature>
<feature type="binding site" evidence="3">
    <location>
        <position position="963"/>
    </location>
    <ligand>
        <name>L-aspartate</name>
        <dbReference type="ChEBI" id="CHEBI:29991"/>
    </ligand>
</feature>
<feature type="modified residue" description="Phosphoserine" evidence="1">
    <location>
        <position position="11"/>
    </location>
</feature>
<evidence type="ECO:0000250" key="1">
    <source>
        <dbReference type="UniProtKB" id="P04711"/>
    </source>
</evidence>
<evidence type="ECO:0000250" key="2">
    <source>
        <dbReference type="UniProtKB" id="P27154"/>
    </source>
</evidence>
<evidence type="ECO:0000250" key="3">
    <source>
        <dbReference type="UniProtKB" id="P30694"/>
    </source>
</evidence>
<evidence type="ECO:0000250" key="4">
    <source>
        <dbReference type="UniProtKB" id="Q9MAH0"/>
    </source>
</evidence>
<evidence type="ECO:0000269" key="5">
    <source>
    </source>
</evidence>
<evidence type="ECO:0000269" key="6">
    <source>
    </source>
</evidence>
<evidence type="ECO:0000303" key="7">
    <source>
    </source>
</evidence>
<evidence type="ECO:0000303" key="8">
    <source>
    </source>
</evidence>
<evidence type="ECO:0000305" key="9"/>
<protein>
    <recommendedName>
        <fullName evidence="7">Phosphoenolpyruvate carboxylase 1</fullName>
        <shortName evidence="7">PEPC 1</shortName>
        <shortName evidence="7">PEPCase 1</shortName>
        <shortName evidence="8">ppcB</shortName>
        <ecNumber evidence="5">4.1.1.31</ecNumber>
    </recommendedName>
</protein>
<name>CAPPB_FLATR</name>
<sequence length="965" mass="110413">MANRNLEKLASIDAHLRLLVPGKVSEDDKLIEYDALLLDKFLDILQDLHGEDLKETVQECYELSAEYEGKRDPKKLEELGSVLTSLDPGDSIVIAKAFSHMLNLANLAEEVQIAYRRRIKLKKGDFADEAHATTESDMEETLKKLVYKLNKSPEEVFDALKNQTVDLVLTAHPTQSVRRSLLQKHGRIRNCLAQLYAKDITPDDKQELDEALHREIQAAFRTDEIRRTQPTPQDEMRAGMSYFHETIWKGVPKFLRRVDTALKNIGINERVPYNAPLIQFSSWMGGDRDGNPRVTPEVTRDVCLLARMMAANMYFSQIEDLMFEMSMWRCTDELRVRAEELFRTARRDVKHYIEFWKQVPPTEPYRVILGDVRDKLYNTRERARHLLAHDISDIPEEAVYTNVEQFLEPLELCYRSLCACGDRVIADGSLLDFLRQVSTFGLSLVKLDIRQESDRHTDVLDAITQHLEIGSYREWSEEKRQEWLLAELSGKRPLFGSDLPKTEEIKDVLDTFNVLAELPSDCFGAYIISMATSPSDVLAVELLQRECHVKQPLRVVPLFEKLADLEAAPAAMARLFSIDWYKNRINGKQEVMIGYSDSGKDAGRFSAAWQLYKAQEELKNVAKEFGVKLVMFHGRGGTVGRGGGPTHLAILSQPPDTIQGSLRVTVQGEVIEQSFGEEHLCFRTLQRFCAATLEHGMNPPISPRPEWRELMDQMAVVATEQYRSIVFKEPRFVEYFRLATPELEYGRMNIGSRPSKRKPSGGIESLRAIPWIFAWTQTRFHLPVWLGFGAAFKQAIQKDSKNLQMLQEMYKTWPFFRVTIDLVEMVFAKGDPGIAALNDKLLVSEDLWPFGESLRANYEETKDYLLKIAGHKDLLEGDPYLKQRLKLRDSYITTLNVCQAYTLKRTRDPNYHVTLRPHISKEYAEPSKPADELIHLNPTSEYAPGLEDTLILTMKGIAAGMQNTG</sequence>
<reference key="1">
    <citation type="journal article" date="2002" name="Planta">
        <title>The non-photosynthetic phosphoenolpyruvate carboxylases of the C4 dicot Flaveria trinervia -- implications for the evolution of C4 photosynthesis.</title>
        <authorList>
            <person name="Blasing O.E."/>
            <person name="Ernst K."/>
            <person name="Streubel M."/>
            <person name="Westhoff P."/>
            <person name="Svensson P."/>
        </authorList>
    </citation>
    <scope>NUCLEOTIDE SEQUENCE [MRNA]</scope>
    <scope>FUNCTION</scope>
    <scope>BIOPHYSICOCHEMICAL PROPERTIES</scope>
    <scope>ACTIVITY REGULATION</scope>
    <scope>CATALYTIC ACTIVITY</scope>
    <source>
        <tissue>Root</tissue>
    </source>
</reference>
<reference key="2">
    <citation type="journal article" date="1997" name="Plant Mol. Biol.">
        <title>The phosphoenolpyruvate carboxylase (ppc) gene family of Flaveria trinervia (C4) and F. pringlei (C3): molecular characterization and expression analysis of the ppcB and ppcC genes.</title>
        <authorList>
            <person name="Ernst K."/>
            <person name="Westhoff P."/>
        </authorList>
    </citation>
    <scope>TISSUE SPECIFICITY</scope>
    <scope>INDUCTION BY GLUCOSE</scope>
</reference>
<comment type="function">
    <text evidence="5">Through the carboxylation of phosphoenolpyruvate (PEP) it forms oxaloacetate, a four-carbon dicarboxylic acid source for the tricarboxylic acid cycle. May be involved in phloem loading with sucrose and in anions and cations uptake and amino acid biosynthesis in roots.</text>
</comment>
<comment type="catalytic activity">
    <reaction evidence="5">
        <text>oxaloacetate + phosphate = phosphoenolpyruvate + hydrogencarbonate</text>
        <dbReference type="Rhea" id="RHEA:28370"/>
        <dbReference type="ChEBI" id="CHEBI:16452"/>
        <dbReference type="ChEBI" id="CHEBI:17544"/>
        <dbReference type="ChEBI" id="CHEBI:43474"/>
        <dbReference type="ChEBI" id="CHEBI:58702"/>
        <dbReference type="EC" id="4.1.1.31"/>
    </reaction>
</comment>
<comment type="cofactor">
    <cofactor evidence="4">
        <name>Mg(2+)</name>
        <dbReference type="ChEBI" id="CHEBI:18420"/>
    </cofactor>
</comment>
<comment type="activity regulation">
    <text evidence="1 3">Activated by the allosteric regulator glucose-6-phosphate (By similarity). Inhibited by malate and aspartate (By similarity). Up regulated by light-reversible phosphorylation (By similarity).</text>
</comment>
<comment type="biophysicochemical properties">
    <kinetics>
        <Vmax evidence="5">83.0 umol/min/mg enzyme</Vmax>
    </kinetics>
</comment>
<comment type="subunit">
    <text evidence="4">Homotetramer.</text>
</comment>
<comment type="subcellular location">
    <subcellularLocation>
        <location evidence="2">Cytoplasm</location>
    </subcellularLocation>
</comment>
<comment type="tissue specificity">
    <text evidence="6">Expressed in roots and stems and at low levels in leaves. Preferentially expressed in the phloem and in root tips.</text>
</comment>
<comment type="similarity">
    <text evidence="9">Belongs to the PEPCase type 1 family.</text>
</comment>
<organism>
    <name type="scientific">Flaveria trinervia</name>
    <name type="common">Clustered yellowtops</name>
    <name type="synonym">Oedera trinervia</name>
    <dbReference type="NCBI Taxonomy" id="4227"/>
    <lineage>
        <taxon>Eukaryota</taxon>
        <taxon>Viridiplantae</taxon>
        <taxon>Streptophyta</taxon>
        <taxon>Embryophyta</taxon>
        <taxon>Tracheophyta</taxon>
        <taxon>Spermatophyta</taxon>
        <taxon>Magnoliopsida</taxon>
        <taxon>eudicotyledons</taxon>
        <taxon>Gunneridae</taxon>
        <taxon>Pentapetalae</taxon>
        <taxon>asterids</taxon>
        <taxon>campanulids</taxon>
        <taxon>Asterales</taxon>
        <taxon>Asteraceae</taxon>
        <taxon>Asteroideae</taxon>
        <taxon>Heliantheae alliance</taxon>
        <taxon>Tageteae</taxon>
        <taxon>Flaveria</taxon>
    </lineage>
</organism>
<gene>
    <name evidence="8" type="primary">PPCB</name>
</gene>
<accession>Q9FV66</accession>